<organism>
    <name type="scientific">Shewanella sp. (strain ANA-3)</name>
    <dbReference type="NCBI Taxonomy" id="94122"/>
    <lineage>
        <taxon>Bacteria</taxon>
        <taxon>Pseudomonadati</taxon>
        <taxon>Pseudomonadota</taxon>
        <taxon>Gammaproteobacteria</taxon>
        <taxon>Alteromonadales</taxon>
        <taxon>Shewanellaceae</taxon>
        <taxon>Shewanella</taxon>
    </lineage>
</organism>
<comment type="catalytic activity">
    <reaction evidence="1">
        <text>2-formamido-N(1)-(5-O-phospho-beta-D-ribosyl)acetamidine + ATP = 5-amino-1-(5-phospho-beta-D-ribosyl)imidazole + ADP + phosphate + H(+)</text>
        <dbReference type="Rhea" id="RHEA:23032"/>
        <dbReference type="ChEBI" id="CHEBI:15378"/>
        <dbReference type="ChEBI" id="CHEBI:30616"/>
        <dbReference type="ChEBI" id="CHEBI:43474"/>
        <dbReference type="ChEBI" id="CHEBI:137981"/>
        <dbReference type="ChEBI" id="CHEBI:147287"/>
        <dbReference type="ChEBI" id="CHEBI:456216"/>
        <dbReference type="EC" id="6.3.3.1"/>
    </reaction>
</comment>
<comment type="pathway">
    <text evidence="1">Purine metabolism; IMP biosynthesis via de novo pathway; 5-amino-1-(5-phospho-D-ribosyl)imidazole from N(2)-formyl-N(1)-(5-phospho-D-ribosyl)glycinamide: step 2/2.</text>
</comment>
<comment type="subcellular location">
    <subcellularLocation>
        <location evidence="1">Cytoplasm</location>
    </subcellularLocation>
</comment>
<comment type="similarity">
    <text evidence="1">Belongs to the AIR synthase family.</text>
</comment>
<keyword id="KW-0067">ATP-binding</keyword>
<keyword id="KW-0963">Cytoplasm</keyword>
<keyword id="KW-0436">Ligase</keyword>
<keyword id="KW-0547">Nucleotide-binding</keyword>
<keyword id="KW-0658">Purine biosynthesis</keyword>
<dbReference type="EC" id="6.3.3.1" evidence="1"/>
<dbReference type="EMBL" id="CP000469">
    <property type="protein sequence ID" value="ABK48772.1"/>
    <property type="molecule type" value="Genomic_DNA"/>
</dbReference>
<dbReference type="RefSeq" id="WP_011623139.1">
    <property type="nucleotide sequence ID" value="NC_008577.1"/>
</dbReference>
<dbReference type="SMR" id="A0KYA3"/>
<dbReference type="STRING" id="94122.Shewana3_2545"/>
<dbReference type="GeneID" id="75188443"/>
<dbReference type="KEGG" id="shn:Shewana3_2545"/>
<dbReference type="eggNOG" id="COG0150">
    <property type="taxonomic scope" value="Bacteria"/>
</dbReference>
<dbReference type="HOGENOM" id="CLU_047116_0_0_6"/>
<dbReference type="OrthoDB" id="9777881at2"/>
<dbReference type="UniPathway" id="UPA00074">
    <property type="reaction ID" value="UER00129"/>
</dbReference>
<dbReference type="Proteomes" id="UP000002589">
    <property type="component" value="Chromosome"/>
</dbReference>
<dbReference type="GO" id="GO:0005829">
    <property type="term" value="C:cytosol"/>
    <property type="evidence" value="ECO:0007669"/>
    <property type="project" value="TreeGrafter"/>
</dbReference>
<dbReference type="GO" id="GO:0005524">
    <property type="term" value="F:ATP binding"/>
    <property type="evidence" value="ECO:0007669"/>
    <property type="project" value="UniProtKB-KW"/>
</dbReference>
<dbReference type="GO" id="GO:0004637">
    <property type="term" value="F:phosphoribosylamine-glycine ligase activity"/>
    <property type="evidence" value="ECO:0007669"/>
    <property type="project" value="TreeGrafter"/>
</dbReference>
<dbReference type="GO" id="GO:0004641">
    <property type="term" value="F:phosphoribosylformylglycinamidine cyclo-ligase activity"/>
    <property type="evidence" value="ECO:0007669"/>
    <property type="project" value="UniProtKB-UniRule"/>
</dbReference>
<dbReference type="GO" id="GO:0006189">
    <property type="term" value="P:'de novo' IMP biosynthetic process"/>
    <property type="evidence" value="ECO:0007669"/>
    <property type="project" value="UniProtKB-UniRule"/>
</dbReference>
<dbReference type="GO" id="GO:0046084">
    <property type="term" value="P:adenine biosynthetic process"/>
    <property type="evidence" value="ECO:0007669"/>
    <property type="project" value="TreeGrafter"/>
</dbReference>
<dbReference type="CDD" id="cd02196">
    <property type="entry name" value="PurM"/>
    <property type="match status" value="1"/>
</dbReference>
<dbReference type="FunFam" id="3.30.1330.10:FF:000001">
    <property type="entry name" value="Phosphoribosylformylglycinamidine cyclo-ligase"/>
    <property type="match status" value="1"/>
</dbReference>
<dbReference type="FunFam" id="3.90.650.10:FF:000001">
    <property type="entry name" value="Phosphoribosylformylglycinamidine cyclo-ligase"/>
    <property type="match status" value="1"/>
</dbReference>
<dbReference type="Gene3D" id="3.90.650.10">
    <property type="entry name" value="PurM-like C-terminal domain"/>
    <property type="match status" value="1"/>
</dbReference>
<dbReference type="Gene3D" id="3.30.1330.10">
    <property type="entry name" value="PurM-like, N-terminal domain"/>
    <property type="match status" value="1"/>
</dbReference>
<dbReference type="HAMAP" id="MF_00741">
    <property type="entry name" value="AIRS"/>
    <property type="match status" value="1"/>
</dbReference>
<dbReference type="InterPro" id="IPR010918">
    <property type="entry name" value="PurM-like_C_dom"/>
</dbReference>
<dbReference type="InterPro" id="IPR036676">
    <property type="entry name" value="PurM-like_C_sf"/>
</dbReference>
<dbReference type="InterPro" id="IPR016188">
    <property type="entry name" value="PurM-like_N"/>
</dbReference>
<dbReference type="InterPro" id="IPR036921">
    <property type="entry name" value="PurM-like_N_sf"/>
</dbReference>
<dbReference type="InterPro" id="IPR004733">
    <property type="entry name" value="PurM_cligase"/>
</dbReference>
<dbReference type="NCBIfam" id="TIGR00878">
    <property type="entry name" value="purM"/>
    <property type="match status" value="1"/>
</dbReference>
<dbReference type="PANTHER" id="PTHR10520:SF12">
    <property type="entry name" value="TRIFUNCTIONAL PURINE BIOSYNTHETIC PROTEIN ADENOSINE-3"/>
    <property type="match status" value="1"/>
</dbReference>
<dbReference type="PANTHER" id="PTHR10520">
    <property type="entry name" value="TRIFUNCTIONAL PURINE BIOSYNTHETIC PROTEIN ADENOSINE-3-RELATED"/>
    <property type="match status" value="1"/>
</dbReference>
<dbReference type="Pfam" id="PF00586">
    <property type="entry name" value="AIRS"/>
    <property type="match status" value="1"/>
</dbReference>
<dbReference type="Pfam" id="PF02769">
    <property type="entry name" value="AIRS_C"/>
    <property type="match status" value="1"/>
</dbReference>
<dbReference type="SUPFAM" id="SSF56042">
    <property type="entry name" value="PurM C-terminal domain-like"/>
    <property type="match status" value="1"/>
</dbReference>
<dbReference type="SUPFAM" id="SSF55326">
    <property type="entry name" value="PurM N-terminal domain-like"/>
    <property type="match status" value="1"/>
</dbReference>
<sequence length="345" mass="36777">MSTPTPLSYKDAGVDIDAGNALVSNIKAAVKRTRRPEVMGNLGGFGALCELPTKYKQPVLVSGTDGVGTKLRLAIDYKKHDTVGIDLVAMCVNDLIVQGAEPLFFLDYYATGKLDVETATSVVNGIGEGCFQSGCALIGGETAEMPGMYEGEDYDLAGFCVGVVEKADIIDGSKVAAGDALIALASSGPHSNGYSLVRKVLEVSQADPQQDLNGKPLIQHLLEPTKIYVKSLLKLIEASDVHAMAHITGGGFWENIPRVLPENCKAVIQGDSWQWPAVFNWLMENGNIAEYEMYRTFNCGVGMIVALPADKVDAALALLAAEGEQAWLIGAIAAREGNEEQVEIL</sequence>
<protein>
    <recommendedName>
        <fullName evidence="1">Phosphoribosylformylglycinamidine cyclo-ligase</fullName>
        <ecNumber evidence="1">6.3.3.1</ecNumber>
    </recommendedName>
    <alternativeName>
        <fullName evidence="1">AIR synthase</fullName>
    </alternativeName>
    <alternativeName>
        <fullName evidence="1">AIRS</fullName>
    </alternativeName>
    <alternativeName>
        <fullName evidence="1">Phosphoribosyl-aminoimidazole synthetase</fullName>
    </alternativeName>
</protein>
<reference key="1">
    <citation type="submission" date="2006-09" db="EMBL/GenBank/DDBJ databases">
        <title>Complete sequence of chromosome 1 of Shewanella sp. ANA-3.</title>
        <authorList>
            <person name="Copeland A."/>
            <person name="Lucas S."/>
            <person name="Lapidus A."/>
            <person name="Barry K."/>
            <person name="Detter J.C."/>
            <person name="Glavina del Rio T."/>
            <person name="Hammon N."/>
            <person name="Israni S."/>
            <person name="Dalin E."/>
            <person name="Tice H."/>
            <person name="Pitluck S."/>
            <person name="Chertkov O."/>
            <person name="Brettin T."/>
            <person name="Bruce D."/>
            <person name="Han C."/>
            <person name="Tapia R."/>
            <person name="Gilna P."/>
            <person name="Schmutz J."/>
            <person name="Larimer F."/>
            <person name="Land M."/>
            <person name="Hauser L."/>
            <person name="Kyrpides N."/>
            <person name="Kim E."/>
            <person name="Newman D."/>
            <person name="Salticov C."/>
            <person name="Konstantinidis K."/>
            <person name="Klappenback J."/>
            <person name="Tiedje J."/>
            <person name="Richardson P."/>
        </authorList>
    </citation>
    <scope>NUCLEOTIDE SEQUENCE [LARGE SCALE GENOMIC DNA]</scope>
    <source>
        <strain>ANA-3</strain>
    </source>
</reference>
<evidence type="ECO:0000255" key="1">
    <source>
        <dbReference type="HAMAP-Rule" id="MF_00741"/>
    </source>
</evidence>
<feature type="chain" id="PRO_1000046468" description="Phosphoribosylformylglycinamidine cyclo-ligase">
    <location>
        <begin position="1"/>
        <end position="345"/>
    </location>
</feature>
<gene>
    <name evidence="1" type="primary">purM</name>
    <name type="ordered locus">Shewana3_2545</name>
</gene>
<proteinExistence type="inferred from homology"/>
<accession>A0KYA3</accession>
<name>PUR5_SHESA</name>